<accession>A9MX07</accession>
<sequence length="80" mass="8932">MPKKNEAPASFETALSELEHIVTRLESGDLPLEDALNEFERGVQLARQGQAKLQQAEQRVQILLSDNEEASPEPFIADNE</sequence>
<organism>
    <name type="scientific">Salmonella paratyphi B (strain ATCC BAA-1250 / SPB7)</name>
    <dbReference type="NCBI Taxonomy" id="1016998"/>
    <lineage>
        <taxon>Bacteria</taxon>
        <taxon>Pseudomonadati</taxon>
        <taxon>Pseudomonadota</taxon>
        <taxon>Gammaproteobacteria</taxon>
        <taxon>Enterobacterales</taxon>
        <taxon>Enterobacteriaceae</taxon>
        <taxon>Salmonella</taxon>
    </lineage>
</organism>
<comment type="function">
    <text evidence="1">Bidirectionally degrades single-stranded DNA into large acid-insoluble oligonucleotides, which are then degraded further into small acid-soluble oligonucleotides.</text>
</comment>
<comment type="catalytic activity">
    <reaction evidence="1">
        <text>Exonucleolytic cleavage in either 5'- to 3'- or 3'- to 5'-direction to yield nucleoside 5'-phosphates.</text>
        <dbReference type="EC" id="3.1.11.6"/>
    </reaction>
</comment>
<comment type="subunit">
    <text evidence="1">Heterooligomer composed of large and small subunits.</text>
</comment>
<comment type="subcellular location">
    <subcellularLocation>
        <location evidence="1">Cytoplasm</location>
    </subcellularLocation>
</comment>
<comment type="similarity">
    <text evidence="1">Belongs to the XseB family.</text>
</comment>
<keyword id="KW-0963">Cytoplasm</keyword>
<keyword id="KW-0269">Exonuclease</keyword>
<keyword id="KW-0378">Hydrolase</keyword>
<keyword id="KW-0540">Nuclease</keyword>
<protein>
    <recommendedName>
        <fullName evidence="1">Exodeoxyribonuclease 7 small subunit</fullName>
        <ecNumber evidence="1">3.1.11.6</ecNumber>
    </recommendedName>
    <alternativeName>
        <fullName evidence="1">Exodeoxyribonuclease VII small subunit</fullName>
        <shortName evidence="1">Exonuclease VII small subunit</shortName>
    </alternativeName>
</protein>
<gene>
    <name evidence="1" type="primary">xseB</name>
    <name type="ordered locus">SPAB_03159</name>
</gene>
<reference key="1">
    <citation type="submission" date="2007-11" db="EMBL/GenBank/DDBJ databases">
        <authorList>
            <consortium name="The Salmonella enterica serovar Paratyphi B Genome Sequencing Project"/>
            <person name="McClelland M."/>
            <person name="Sanderson E.K."/>
            <person name="Porwollik S."/>
            <person name="Spieth J."/>
            <person name="Clifton W.S."/>
            <person name="Fulton R."/>
            <person name="Cordes M."/>
            <person name="Wollam A."/>
            <person name="Shah N."/>
            <person name="Pepin K."/>
            <person name="Bhonagiri V."/>
            <person name="Nash W."/>
            <person name="Johnson M."/>
            <person name="Thiruvilangam P."/>
            <person name="Wilson R."/>
        </authorList>
    </citation>
    <scope>NUCLEOTIDE SEQUENCE [LARGE SCALE GENOMIC DNA]</scope>
    <source>
        <strain>ATCC BAA-1250 / SPB7</strain>
    </source>
</reference>
<evidence type="ECO:0000255" key="1">
    <source>
        <dbReference type="HAMAP-Rule" id="MF_00337"/>
    </source>
</evidence>
<proteinExistence type="inferred from homology"/>
<dbReference type="EC" id="3.1.11.6" evidence="1"/>
<dbReference type="EMBL" id="CP000886">
    <property type="protein sequence ID" value="ABX68520.1"/>
    <property type="molecule type" value="Genomic_DNA"/>
</dbReference>
<dbReference type="RefSeq" id="WP_001124944.1">
    <property type="nucleotide sequence ID" value="NC_010102.1"/>
</dbReference>
<dbReference type="SMR" id="A9MX07"/>
<dbReference type="KEGG" id="spq:SPAB_03159"/>
<dbReference type="PATRIC" id="fig|1016998.12.peg.2980"/>
<dbReference type="HOGENOM" id="CLU_145918_3_3_6"/>
<dbReference type="BioCyc" id="SENT1016998:SPAB_RS12900-MONOMER"/>
<dbReference type="Proteomes" id="UP000008556">
    <property type="component" value="Chromosome"/>
</dbReference>
<dbReference type="GO" id="GO:0005829">
    <property type="term" value="C:cytosol"/>
    <property type="evidence" value="ECO:0007669"/>
    <property type="project" value="TreeGrafter"/>
</dbReference>
<dbReference type="GO" id="GO:0009318">
    <property type="term" value="C:exodeoxyribonuclease VII complex"/>
    <property type="evidence" value="ECO:0007669"/>
    <property type="project" value="InterPro"/>
</dbReference>
<dbReference type="GO" id="GO:0008855">
    <property type="term" value="F:exodeoxyribonuclease VII activity"/>
    <property type="evidence" value="ECO:0007669"/>
    <property type="project" value="UniProtKB-UniRule"/>
</dbReference>
<dbReference type="GO" id="GO:0006308">
    <property type="term" value="P:DNA catabolic process"/>
    <property type="evidence" value="ECO:0007669"/>
    <property type="project" value="UniProtKB-UniRule"/>
</dbReference>
<dbReference type="FunFam" id="1.10.287.1040:FF:000001">
    <property type="entry name" value="Exodeoxyribonuclease 7 small subunit"/>
    <property type="match status" value="1"/>
</dbReference>
<dbReference type="Gene3D" id="1.10.287.1040">
    <property type="entry name" value="Exonuclease VII, small subunit"/>
    <property type="match status" value="1"/>
</dbReference>
<dbReference type="HAMAP" id="MF_00337">
    <property type="entry name" value="Exonuc_7_S"/>
    <property type="match status" value="1"/>
</dbReference>
<dbReference type="InterPro" id="IPR003761">
    <property type="entry name" value="Exonuc_VII_S"/>
</dbReference>
<dbReference type="InterPro" id="IPR037004">
    <property type="entry name" value="Exonuc_VII_ssu_sf"/>
</dbReference>
<dbReference type="NCBIfam" id="NF002137">
    <property type="entry name" value="PRK00977.1-1"/>
    <property type="match status" value="1"/>
</dbReference>
<dbReference type="NCBIfam" id="NF002140">
    <property type="entry name" value="PRK00977.1-4"/>
    <property type="match status" value="1"/>
</dbReference>
<dbReference type="NCBIfam" id="TIGR01280">
    <property type="entry name" value="xseB"/>
    <property type="match status" value="1"/>
</dbReference>
<dbReference type="PANTHER" id="PTHR34137">
    <property type="entry name" value="EXODEOXYRIBONUCLEASE 7 SMALL SUBUNIT"/>
    <property type="match status" value="1"/>
</dbReference>
<dbReference type="PANTHER" id="PTHR34137:SF1">
    <property type="entry name" value="EXODEOXYRIBONUCLEASE 7 SMALL SUBUNIT"/>
    <property type="match status" value="1"/>
</dbReference>
<dbReference type="Pfam" id="PF02609">
    <property type="entry name" value="Exonuc_VII_S"/>
    <property type="match status" value="1"/>
</dbReference>
<dbReference type="PIRSF" id="PIRSF006488">
    <property type="entry name" value="Exonuc_VII_S"/>
    <property type="match status" value="1"/>
</dbReference>
<dbReference type="SUPFAM" id="SSF116842">
    <property type="entry name" value="XseB-like"/>
    <property type="match status" value="1"/>
</dbReference>
<name>EX7S_SALPB</name>
<feature type="chain" id="PRO_1000079292" description="Exodeoxyribonuclease 7 small subunit">
    <location>
        <begin position="1"/>
        <end position="80"/>
    </location>
</feature>